<accession>O70172</accession>
<keyword id="KW-0007">Acetylation</keyword>
<keyword id="KW-0067">ATP-binding</keyword>
<keyword id="KW-1003">Cell membrane</keyword>
<keyword id="KW-0966">Cell projection</keyword>
<keyword id="KW-0963">Cytoplasm</keyword>
<keyword id="KW-0903">Direct protein sequencing</keyword>
<keyword id="KW-0418">Kinase</keyword>
<keyword id="KW-0443">Lipid metabolism</keyword>
<keyword id="KW-0458">Lysosome</keyword>
<keyword id="KW-0472">Membrane</keyword>
<keyword id="KW-0547">Nucleotide-binding</keyword>
<keyword id="KW-0539">Nucleus</keyword>
<keyword id="KW-0597">Phosphoprotein</keyword>
<keyword id="KW-1185">Reference proteome</keyword>
<keyword id="KW-0808">Transferase</keyword>
<feature type="initiator methionine" description="Removed" evidence="1">
    <location>
        <position position="1"/>
    </location>
</feature>
<feature type="chain" id="PRO_0000185466" description="Phosphatidylinositol 5-phosphate 4-kinase type-2 alpha">
    <location>
        <begin position="2"/>
        <end position="405"/>
    </location>
</feature>
<feature type="domain" description="PIPK" evidence="4">
    <location>
        <begin position="33"/>
        <end position="405"/>
    </location>
</feature>
<feature type="region of interest" description="Required for interaction with PIP5K1A" evidence="2">
    <location>
        <begin position="59"/>
        <end position="65"/>
    </location>
</feature>
<feature type="region of interest" description="Disordered" evidence="5">
    <location>
        <begin position="288"/>
        <end position="328"/>
    </location>
</feature>
<feature type="compositionally biased region" description="Acidic residues" evidence="5">
    <location>
        <begin position="289"/>
        <end position="304"/>
    </location>
</feature>
<feature type="modified residue" description="N-acetylalanine" evidence="1">
    <location>
        <position position="2"/>
    </location>
</feature>
<feature type="modified residue" description="Phosphothreonine" evidence="1">
    <location>
        <position position="3"/>
    </location>
</feature>
<feature type="modified residue" description="Phosphoserine" evidence="1">
    <location>
        <position position="14"/>
    </location>
</feature>
<feature type="modified residue" description="N6-acetyllysine" evidence="1">
    <location>
        <position position="89"/>
    </location>
</feature>
<feature type="modified residue" description="N6-acetyllysine" evidence="1">
    <location>
        <position position="145"/>
    </location>
</feature>
<comment type="function">
    <text evidence="1 3 6 8">Catalyzes the phosphorylation of phosphatidylinositol 5-phosphate (PtdIns5P) on the fourth hydroxyl of the myo-inositol ring, to form phosphatidylinositol 4,5-bisphosphate (PtdIns(4,5)P2). Has both ATP- and GTP-dependent kinase activities. May exert its function by regulating the levels of PtdIns5P, which functions in the cytosol by increasing AKT activity and in the nucleus signals through ING2 (By similarity). May regulate the pool of cytosolic PtdIns5P in response to the activation of tyrosine phosphorylation (By similarity). Required for lysosome-peroxisome membrane contacts and intracellular cholesterol transport through modulating peroxisomal PtdIns(4,5)P2 level (By similarity). In collaboration with PIP4K2B, has a role in mediating autophagy in times of nutrient stress (PubMed:29727621). Required for autophagosome-lysosome fusion and the regulation of cellular lipid metabolism (PubMed:29727621). Negatively regulates insulin signaling through a catalytic-independent mechanism. PIP4Ks interact with PIP5Ks and suppress PIP5K-mediated PtdIns(4,5)P2 synthesis and insulin-dependent conversion to PtdIns(3,4,5)P3 (By similarity). May be involved in thrombopoiesis, and the terminal maturation of megakaryocytes and regulation of their size (PubMed:16434494).</text>
</comment>
<comment type="catalytic activity">
    <reaction evidence="1">
        <text>a 1,2-diacyl-sn-glycero-3-phospho-(1D-myo-inositol-5-phosphate) + ATP = a 1,2-diacyl-sn-glycero-3-phospho-(1D-myo-inositol-4,5-bisphosphate) + ADP + H(+)</text>
        <dbReference type="Rhea" id="RHEA:12280"/>
        <dbReference type="ChEBI" id="CHEBI:15378"/>
        <dbReference type="ChEBI" id="CHEBI:30616"/>
        <dbReference type="ChEBI" id="CHEBI:57795"/>
        <dbReference type="ChEBI" id="CHEBI:58456"/>
        <dbReference type="ChEBI" id="CHEBI:456216"/>
        <dbReference type="EC" id="2.7.1.149"/>
    </reaction>
    <physiologicalReaction direction="left-to-right" evidence="1">
        <dbReference type="Rhea" id="RHEA:12281"/>
    </physiologicalReaction>
</comment>
<comment type="catalytic activity">
    <reaction evidence="1">
        <text>1,2-dihexadecanoyl-sn-glycero-3-phospho-(1D-myo-inositol-5-phosphate) + ATP = 1,2-dihexadecanoyl-sn-glycero-3-phospho-(1D-myo-inositol-4,5-bisphosphate) + ADP + H(+)</text>
        <dbReference type="Rhea" id="RHEA:55992"/>
        <dbReference type="ChEBI" id="CHEBI:15378"/>
        <dbReference type="ChEBI" id="CHEBI:30616"/>
        <dbReference type="ChEBI" id="CHEBI:83423"/>
        <dbReference type="ChEBI" id="CHEBI:84968"/>
        <dbReference type="ChEBI" id="CHEBI:456216"/>
    </reaction>
    <physiologicalReaction direction="left-to-right" evidence="1">
        <dbReference type="Rhea" id="RHEA:55993"/>
    </physiologicalReaction>
</comment>
<comment type="catalytic activity">
    <reaction evidence="1">
        <text>1,2-dihexadecanoyl-sn-glycero-3-phospho-(1D-myo-inositol-5-phosphate) + GTP = 1,2-dihexadecanoyl-sn-glycero-3-phospho-(1D-myo-inositol-4,5-bisphosphate) + GDP + H(+)</text>
        <dbReference type="Rhea" id="RHEA:55964"/>
        <dbReference type="ChEBI" id="CHEBI:15378"/>
        <dbReference type="ChEBI" id="CHEBI:37565"/>
        <dbReference type="ChEBI" id="CHEBI:58189"/>
        <dbReference type="ChEBI" id="CHEBI:83423"/>
        <dbReference type="ChEBI" id="CHEBI:84968"/>
    </reaction>
    <physiologicalReaction direction="left-to-right" evidence="1">
        <dbReference type="Rhea" id="RHEA:55965"/>
    </physiologicalReaction>
</comment>
<comment type="activity regulation">
    <text evidence="3">In rod outer segments, activated by light.</text>
</comment>
<comment type="subunit">
    <text evidence="1 2">Homodimer. Interacts with PIP4K2B; the interaction may regulate localization to the nucleus (By similarity). Probably interacts with PIP5K1A; the interaction inhibits PIP5K1A kinase activity (By similarity).</text>
</comment>
<comment type="interaction">
    <interactant intactId="EBI-644828">
        <id>O70172</id>
    </interactant>
    <interactant intactId="EBI-355383">
        <id>Q96A65</id>
        <label>EXOC4</label>
    </interactant>
    <organismsDiffer>true</organismsDiffer>
    <experiments>3</experiments>
</comment>
<comment type="interaction">
    <interactant intactId="EBI-644828">
        <id>O70172</id>
    </interactant>
    <interactant intactId="EBI-2864109">
        <id>Q13496</id>
        <label>MTM1</label>
    </interactant>
    <organismsDiffer>true</organismsDiffer>
    <experiments>2</experiments>
</comment>
<comment type="subcellular location">
    <subcellularLocation>
        <location evidence="7">Cell membrane</location>
    </subcellularLocation>
    <subcellularLocation>
        <location evidence="1">Nucleus</location>
    </subcellularLocation>
    <subcellularLocation>
        <location evidence="8">Lysosome</location>
    </subcellularLocation>
    <subcellularLocation>
        <location evidence="7">Cytoplasm</location>
    </subcellularLocation>
    <subcellularLocation>
        <location evidence="10">Photoreceptor inner segment</location>
    </subcellularLocation>
    <subcellularLocation>
        <location evidence="10">Cell projection</location>
        <location evidence="10">Cilium</location>
        <location evidence="10">Photoreceptor outer segment</location>
    </subcellularLocation>
    <text evidence="1 7">May translocate from the cytosol to the cell membrane upon activation of tyrosine phosphorylation. May translocate from the inner to the outer segments of the rod photoreceptor cells in response to light (PubMed:20204506). Localization to the nucleus is modulated by the interaction with PIP4K2B (By similarity).</text>
</comment>
<comment type="tissue specificity">
    <text evidence="7">Detected in rod photoreceptor cells.</text>
</comment>
<comment type="PTM">
    <text evidence="3">Phosphorylated in tyrosines. Phosphorylation is induced by light and increases kinase activity.</text>
</comment>
<organism>
    <name type="scientific">Mus musculus</name>
    <name type="common">Mouse</name>
    <dbReference type="NCBI Taxonomy" id="10090"/>
    <lineage>
        <taxon>Eukaryota</taxon>
        <taxon>Metazoa</taxon>
        <taxon>Chordata</taxon>
        <taxon>Craniata</taxon>
        <taxon>Vertebrata</taxon>
        <taxon>Euteleostomi</taxon>
        <taxon>Mammalia</taxon>
        <taxon>Eutheria</taxon>
        <taxon>Euarchontoglires</taxon>
        <taxon>Glires</taxon>
        <taxon>Rodentia</taxon>
        <taxon>Myomorpha</taxon>
        <taxon>Muroidea</taxon>
        <taxon>Muridae</taxon>
        <taxon>Murinae</taxon>
        <taxon>Mus</taxon>
        <taxon>Mus</taxon>
    </lineage>
</organism>
<dbReference type="EC" id="2.7.1.149" evidence="1"/>
<dbReference type="EMBL" id="AB009615">
    <property type="protein sequence ID" value="BAA25676.1"/>
    <property type="molecule type" value="mRNA"/>
</dbReference>
<dbReference type="EMBL" id="BC011097">
    <property type="protein sequence ID" value="AAH11097.1"/>
    <property type="molecule type" value="mRNA"/>
</dbReference>
<dbReference type="CCDS" id="CCDS15712.1"/>
<dbReference type="RefSeq" id="NP_032871.3">
    <property type="nucleotide sequence ID" value="NM_008845.4"/>
</dbReference>
<dbReference type="SMR" id="O70172"/>
<dbReference type="BioGRID" id="202170">
    <property type="interactions" value="14"/>
</dbReference>
<dbReference type="DIP" id="DIP-49438N"/>
<dbReference type="FunCoup" id="O70172">
    <property type="interactions" value="1996"/>
</dbReference>
<dbReference type="IntAct" id="O70172">
    <property type="interactions" value="7"/>
</dbReference>
<dbReference type="MINT" id="O70172"/>
<dbReference type="STRING" id="10090.ENSMUSP00000006912"/>
<dbReference type="GlyGen" id="O70172">
    <property type="glycosylation" value="2 sites, 1 O-linked glycan (1 site)"/>
</dbReference>
<dbReference type="iPTMnet" id="O70172"/>
<dbReference type="PhosphoSitePlus" id="O70172"/>
<dbReference type="SwissPalm" id="O70172"/>
<dbReference type="jPOST" id="O70172"/>
<dbReference type="PaxDb" id="10090-ENSMUSP00000006912"/>
<dbReference type="PeptideAtlas" id="O70172"/>
<dbReference type="ProteomicsDB" id="289563"/>
<dbReference type="Pumba" id="O70172"/>
<dbReference type="Antibodypedia" id="25686">
    <property type="antibodies" value="361 antibodies from 33 providers"/>
</dbReference>
<dbReference type="DNASU" id="18718"/>
<dbReference type="Ensembl" id="ENSMUST00000006912.12">
    <property type="protein sequence ID" value="ENSMUSP00000006912.6"/>
    <property type="gene ID" value="ENSMUSG00000026737.13"/>
</dbReference>
<dbReference type="GeneID" id="18718"/>
<dbReference type="KEGG" id="mmu:18718"/>
<dbReference type="UCSC" id="uc008imb.1">
    <property type="organism name" value="mouse"/>
</dbReference>
<dbReference type="AGR" id="MGI:1298206"/>
<dbReference type="CTD" id="5305"/>
<dbReference type="MGI" id="MGI:1298206">
    <property type="gene designation" value="Pip4k2a"/>
</dbReference>
<dbReference type="VEuPathDB" id="HostDB:ENSMUSG00000026737"/>
<dbReference type="eggNOG" id="KOG0229">
    <property type="taxonomic scope" value="Eukaryota"/>
</dbReference>
<dbReference type="GeneTree" id="ENSGT00940000156508"/>
<dbReference type="HOGENOM" id="CLU_004312_7_0_1"/>
<dbReference type="InParanoid" id="O70172"/>
<dbReference type="OMA" id="DYSPMCY"/>
<dbReference type="OrthoDB" id="20783at2759"/>
<dbReference type="PhylomeDB" id="O70172"/>
<dbReference type="TreeFam" id="TF354315"/>
<dbReference type="Reactome" id="R-MMU-1660499">
    <property type="pathway name" value="Synthesis of PIPs at the plasma membrane"/>
</dbReference>
<dbReference type="Reactome" id="R-MMU-6811555">
    <property type="pathway name" value="PI5P Regulates TP53 Acetylation"/>
</dbReference>
<dbReference type="Reactome" id="R-MMU-6811558">
    <property type="pathway name" value="PI5P, PP2A and IER3 Regulate PI3K/AKT Signaling"/>
</dbReference>
<dbReference type="Reactome" id="R-MMU-8847453">
    <property type="pathway name" value="Synthesis of PIPs in the nucleus"/>
</dbReference>
<dbReference type="BioGRID-ORCS" id="18718">
    <property type="hits" value="4 hits in 78 CRISPR screens"/>
</dbReference>
<dbReference type="CD-CODE" id="CE726F99">
    <property type="entry name" value="Postsynaptic density"/>
</dbReference>
<dbReference type="ChiTaRS" id="Pip4k2a">
    <property type="organism name" value="mouse"/>
</dbReference>
<dbReference type="PRO" id="PR:O70172"/>
<dbReference type="Proteomes" id="UP000000589">
    <property type="component" value="Chromosome 2"/>
</dbReference>
<dbReference type="RNAct" id="O70172">
    <property type="molecule type" value="protein"/>
</dbReference>
<dbReference type="Bgee" id="ENSMUSG00000026737">
    <property type="expression patterns" value="Expressed in cerebellar nuclear complex and 278 other cell types or tissues"/>
</dbReference>
<dbReference type="ExpressionAtlas" id="O70172">
    <property type="expression patterns" value="baseline and differential"/>
</dbReference>
<dbReference type="GO" id="GO:0005776">
    <property type="term" value="C:autophagosome"/>
    <property type="evidence" value="ECO:0007669"/>
    <property type="project" value="Ensembl"/>
</dbReference>
<dbReference type="GO" id="GO:0005829">
    <property type="term" value="C:cytosol"/>
    <property type="evidence" value="ECO:0007669"/>
    <property type="project" value="Ensembl"/>
</dbReference>
<dbReference type="GO" id="GO:0005764">
    <property type="term" value="C:lysosome"/>
    <property type="evidence" value="ECO:0000314"/>
    <property type="project" value="UniProtKB"/>
</dbReference>
<dbReference type="GO" id="GO:0005634">
    <property type="term" value="C:nucleus"/>
    <property type="evidence" value="ECO:0007669"/>
    <property type="project" value="UniProtKB-SubCell"/>
</dbReference>
<dbReference type="GO" id="GO:0001917">
    <property type="term" value="C:photoreceptor inner segment"/>
    <property type="evidence" value="ECO:0007669"/>
    <property type="project" value="UniProtKB-SubCell"/>
</dbReference>
<dbReference type="GO" id="GO:0001750">
    <property type="term" value="C:photoreceptor outer segment"/>
    <property type="evidence" value="ECO:0007669"/>
    <property type="project" value="UniProtKB-SubCell"/>
</dbReference>
<dbReference type="GO" id="GO:0005886">
    <property type="term" value="C:plasma membrane"/>
    <property type="evidence" value="ECO:0007669"/>
    <property type="project" value="UniProtKB-SubCell"/>
</dbReference>
<dbReference type="GO" id="GO:0016308">
    <property type="term" value="F:1-phosphatidylinositol-4-phosphate 5-kinase activity"/>
    <property type="evidence" value="ECO:0000250"/>
    <property type="project" value="UniProtKB"/>
</dbReference>
<dbReference type="GO" id="GO:0016309">
    <property type="term" value="F:1-phosphatidylinositol-5-phosphate 4-kinase activity"/>
    <property type="evidence" value="ECO:0007669"/>
    <property type="project" value="UniProtKB-EC"/>
</dbReference>
<dbReference type="GO" id="GO:0005524">
    <property type="term" value="F:ATP binding"/>
    <property type="evidence" value="ECO:0007669"/>
    <property type="project" value="UniProtKB-KW"/>
</dbReference>
<dbReference type="GO" id="GO:0042803">
    <property type="term" value="F:protein homodimerization activity"/>
    <property type="evidence" value="ECO:0000250"/>
    <property type="project" value="UniProtKB"/>
</dbReference>
<dbReference type="GO" id="GO:1902635">
    <property type="term" value="P:1-phosphatidyl-1D-myo-inositol 4,5-bisphosphate biosynthetic process"/>
    <property type="evidence" value="ECO:0000250"/>
    <property type="project" value="UniProtKB"/>
</dbReference>
<dbReference type="GO" id="GO:0061909">
    <property type="term" value="P:autophagosome-lysosome fusion"/>
    <property type="evidence" value="ECO:0000315"/>
    <property type="project" value="UniProtKB"/>
</dbReference>
<dbReference type="GO" id="GO:0035855">
    <property type="term" value="P:megakaryocyte development"/>
    <property type="evidence" value="ECO:0000315"/>
    <property type="project" value="UniProtKB"/>
</dbReference>
<dbReference type="GO" id="GO:0046627">
    <property type="term" value="P:negative regulation of insulin receptor signaling pathway"/>
    <property type="evidence" value="ECO:0000250"/>
    <property type="project" value="UniProtKB"/>
</dbReference>
<dbReference type="GO" id="GO:2000786">
    <property type="term" value="P:positive regulation of autophagosome assembly"/>
    <property type="evidence" value="ECO:0007669"/>
    <property type="project" value="Ensembl"/>
</dbReference>
<dbReference type="GO" id="GO:0010506">
    <property type="term" value="P:regulation of autophagy"/>
    <property type="evidence" value="ECO:0000315"/>
    <property type="project" value="UniProtKB"/>
</dbReference>
<dbReference type="GO" id="GO:0090119">
    <property type="term" value="P:vesicle-mediated cholesterol transport"/>
    <property type="evidence" value="ECO:0000250"/>
    <property type="project" value="UniProtKB"/>
</dbReference>
<dbReference type="CDD" id="cd17309">
    <property type="entry name" value="PIPKc_PIP5K2A"/>
    <property type="match status" value="1"/>
</dbReference>
<dbReference type="FunFam" id="3.30.800.10:FF:000002">
    <property type="entry name" value="Phosphatidylinositol 5-phosphate 4-kinase type-2 beta"/>
    <property type="match status" value="1"/>
</dbReference>
<dbReference type="FunFam" id="3.30.810.10:FF:000003">
    <property type="entry name" value="Phosphatidylinositol 5-phosphate 4-kinase type-2 beta"/>
    <property type="match status" value="1"/>
</dbReference>
<dbReference type="FunFam" id="3.30.810.10:FF:000004">
    <property type="entry name" value="Phosphatidylinositol 5-phosphate 4-kinase type-2 beta"/>
    <property type="match status" value="1"/>
</dbReference>
<dbReference type="Gene3D" id="3.30.810.10">
    <property type="entry name" value="2-Layer Sandwich"/>
    <property type="match status" value="2"/>
</dbReference>
<dbReference type="Gene3D" id="3.30.800.10">
    <property type="entry name" value="Phosphatidylinositol Phosphate Kinase II Beta"/>
    <property type="match status" value="1"/>
</dbReference>
<dbReference type="InterPro" id="IPR027483">
    <property type="entry name" value="PInositol-4-P-4/5-kinase_C_sf"/>
</dbReference>
<dbReference type="InterPro" id="IPR002498">
    <property type="entry name" value="PInositol-4-P-4/5-kinase_core"/>
</dbReference>
<dbReference type="InterPro" id="IPR027484">
    <property type="entry name" value="PInositol-4-P-5-kinase_N"/>
</dbReference>
<dbReference type="InterPro" id="IPR023610">
    <property type="entry name" value="PInositol-4/5-P-5/4-kinase"/>
</dbReference>
<dbReference type="PANTHER" id="PTHR23086:SF21">
    <property type="entry name" value="PHOSPHATIDYLINOSITOL 5-PHOSPHATE 4-KINASE TYPE-2 ALPHA"/>
    <property type="match status" value="1"/>
</dbReference>
<dbReference type="PANTHER" id="PTHR23086">
    <property type="entry name" value="PHOSPHATIDYLINOSITOL-4-PHOSPHATE 5-KINASE"/>
    <property type="match status" value="1"/>
</dbReference>
<dbReference type="Pfam" id="PF01504">
    <property type="entry name" value="PIP5K"/>
    <property type="match status" value="1"/>
</dbReference>
<dbReference type="SMART" id="SM00330">
    <property type="entry name" value="PIPKc"/>
    <property type="match status" value="1"/>
</dbReference>
<dbReference type="SUPFAM" id="SSF56104">
    <property type="entry name" value="SAICAR synthase-like"/>
    <property type="match status" value="1"/>
</dbReference>
<dbReference type="PROSITE" id="PS51455">
    <property type="entry name" value="PIPK"/>
    <property type="match status" value="1"/>
</dbReference>
<evidence type="ECO:0000250" key="1">
    <source>
        <dbReference type="UniProtKB" id="P48426"/>
    </source>
</evidence>
<evidence type="ECO:0000250" key="2">
    <source>
        <dbReference type="UniProtKB" id="Q8TBX8"/>
    </source>
</evidence>
<evidence type="ECO:0000250" key="3">
    <source>
        <dbReference type="UniProtKB" id="Q9R0I8"/>
    </source>
</evidence>
<evidence type="ECO:0000255" key="4">
    <source>
        <dbReference type="PROSITE-ProRule" id="PRU00781"/>
    </source>
</evidence>
<evidence type="ECO:0000256" key="5">
    <source>
        <dbReference type="SAM" id="MobiDB-lite"/>
    </source>
</evidence>
<evidence type="ECO:0000269" key="6">
    <source>
    </source>
</evidence>
<evidence type="ECO:0000269" key="7">
    <source>
    </source>
</evidence>
<evidence type="ECO:0000269" key="8">
    <source>
    </source>
</evidence>
<evidence type="ECO:0000305" key="9"/>
<evidence type="ECO:0000305" key="10">
    <source>
    </source>
</evidence>
<evidence type="ECO:0000312" key="11">
    <source>
        <dbReference type="MGI" id="MGI:1298206"/>
    </source>
</evidence>
<proteinExistence type="evidence at protein level"/>
<reference key="1">
    <citation type="journal article" date="1998" name="J. Biol. Chem.">
        <title>Type I phosphatidylinositol-4-phosphate 5-kinases. Cloning of the third isoform and deletion/substitution analysis of members of this novel lipid kinase family.</title>
        <authorList>
            <person name="Ishihara H."/>
            <person name="Shibasaki Y."/>
            <person name="Kizuki N."/>
            <person name="Wada T."/>
            <person name="Yazaki Y."/>
            <person name="Asano T."/>
            <person name="Oka Y."/>
        </authorList>
    </citation>
    <scope>NUCLEOTIDE SEQUENCE [MRNA]</scope>
</reference>
<reference key="2">
    <citation type="journal article" date="2004" name="Genome Res.">
        <title>The status, quality, and expansion of the NIH full-length cDNA project: the Mammalian Gene Collection (MGC).</title>
        <authorList>
            <consortium name="The MGC Project Team"/>
        </authorList>
    </citation>
    <scope>NUCLEOTIDE SEQUENCE [LARGE SCALE MRNA]</scope>
    <source>
        <tissue>Mammary tumor</tissue>
    </source>
</reference>
<reference key="3">
    <citation type="submission" date="2009-01" db="UniProtKB">
        <authorList>
            <person name="Lubec G."/>
            <person name="Sunyer B."/>
            <person name="Chen W.-Q."/>
        </authorList>
    </citation>
    <scope>PROTEIN SEQUENCE OF 262-270</scope>
    <scope>IDENTIFICATION BY MASS SPECTROMETRY</scope>
    <source>
        <strain>OF1</strain>
        <tissue>Hippocampus</tissue>
    </source>
</reference>
<reference key="4">
    <citation type="journal article" date="2006" name="Blood">
        <title>Characterization of the megakaryocyte demarcation membrane system and its role in thrombopoiesis.</title>
        <authorList>
            <person name="Schulze H."/>
            <person name="Korpal M."/>
            <person name="Hurov J."/>
            <person name="Kim S.-W."/>
            <person name="Zhang J."/>
            <person name="Cantley L.C."/>
            <person name="Graf T."/>
            <person name="Shivdasani R.A."/>
        </authorList>
    </citation>
    <scope>FUNCTION IN THROMBOPOIESIS</scope>
    <scope>SUBCELLULAR LOCATION</scope>
</reference>
<reference key="5">
    <citation type="journal article" date="2010" name="Cell">
        <title>A tissue-specific atlas of mouse protein phosphorylation and expression.</title>
        <authorList>
            <person name="Huttlin E.L."/>
            <person name="Jedrychowski M.P."/>
            <person name="Elias J.E."/>
            <person name="Goswami T."/>
            <person name="Rad R."/>
            <person name="Beausoleil S.A."/>
            <person name="Villen J."/>
            <person name="Haas W."/>
            <person name="Sowa M.E."/>
            <person name="Gygi S.P."/>
        </authorList>
    </citation>
    <scope>IDENTIFICATION BY MASS SPECTROMETRY [LARGE SCALE ANALYSIS]</scope>
    <source>
        <tissue>Brain</tissue>
        <tissue>Lung</tissue>
        <tissue>Spleen</tissue>
    </source>
</reference>
<reference key="6">
    <citation type="journal article" date="2011" name="Neurochem. Res.">
        <title>Light-induced tyrosine phosphorylation of rod outer segment membrane proteins regulate the translocation, membrane binding and activation of type II alpha phosphatidylinositol-5-phosphate 4-kinase.</title>
        <authorList>
            <person name="Huang Z."/>
            <person name="Anderson R.E."/>
            <person name="Cao W."/>
            <person name="Wiechmann A.F."/>
            <person name="Rajala R.V.S."/>
        </authorList>
    </citation>
    <scope>SUBCELLULAR LOCATION</scope>
    <scope>TISSUE SPECIFICITY</scope>
</reference>
<reference key="7">
    <citation type="journal article" date="2018" name="Mol. Cell">
        <title>Phosphatidylinositol-5-Phosphate 4-Kinases Regulate Cellular Lipid Metabolism By Facilitating Autophagy.</title>
        <authorList>
            <person name="Lundquist M.R."/>
            <person name="Goncalves M.D."/>
            <person name="Loughran R.M."/>
            <person name="Possik E."/>
            <person name="Vijayaraghavan T."/>
            <person name="Yang A."/>
            <person name="Pauli C."/>
            <person name="Ravi A."/>
            <person name="Verma A."/>
            <person name="Yang Z."/>
            <person name="Johnson J.L."/>
            <person name="Wong J.C.Y."/>
            <person name="Ma Y."/>
            <person name="Hwang K.S."/>
            <person name="Weinkove D."/>
            <person name="Divecha N."/>
            <person name="Asara J.M."/>
            <person name="Elemento O."/>
            <person name="Rubin M.A."/>
            <person name="Kimmelman A.C."/>
            <person name="Pause A."/>
            <person name="Cantley L.C."/>
            <person name="Emerling B.M."/>
        </authorList>
    </citation>
    <scope>FUNCTION</scope>
    <scope>SUBCELLULAR LOCATION</scope>
</reference>
<sequence>MATPGNLGSSVLASKTKTKKKHFVAQKVKLFRASDPLLSVLMWGVNHSINELSHVQIPVMLMPDDFKAYSKIKVDNHLFNKENMPSHFKFKEYCPMVFRNLRERFGIDDQDFQNSLTRSAPLPNDSQARSGARFHTSYDKRYVIKTITSEDVAEMHNILKKYHQYIVECHGVTLLPQFLGMYRLNVDGVEIYVIVTRNVFSHRLSVYRKYDLKGSTVAREASDKEKAKELPTLKDNDFINEGQKIYIDDNNKKIFLEKLKKDVEFLAQLKLMDYSLLVGIHDVERAEQEEVECEENDGEEEGESDSTHPIGTPPDSPGNTLNSSPPLAPGEFDPNIDVYAIKCHENAPRKEVYFMAIIDILTHYDAKKKAAHAAKTVKHGAGAEISTVNPEQYSKRFLDFIGHIL</sequence>
<gene>
    <name evidence="11" type="primary">Pip4k2a</name>
    <name type="synonym">Pi5p4ka</name>
    <name type="synonym">Pip5k2a</name>
</gene>
<protein>
    <recommendedName>
        <fullName evidence="9">Phosphatidylinositol 5-phosphate 4-kinase type-2 alpha</fullName>
        <ecNumber evidence="1">2.7.1.149</ecNumber>
    </recommendedName>
    <alternativeName>
        <fullName>1-phosphatidylinositol 5-phosphate 4-kinase 2-alpha</fullName>
    </alternativeName>
    <alternativeName>
        <fullName>Diphosphoinositide kinase 2-alpha</fullName>
    </alternativeName>
    <alternativeName>
        <fullName>Phosphatidylinositol 5-Phosphate 4-Kinase</fullName>
        <shortName>PI5P4Kalpha</shortName>
    </alternativeName>
    <alternativeName>
        <fullName>Phosphatidylinositol 5-phosphate 4-kinase type II alpha</fullName>
        <shortName>PI(5)P 4-kinase type II alpha</shortName>
        <shortName>PIP4KII-alpha</shortName>
    </alternativeName>
    <alternativeName>
        <fullName>PtdIns(5)P-4-kinase isoform 2-alpha</fullName>
    </alternativeName>
</protein>
<name>PI42A_MOUSE</name>